<sequence length="418" mass="47365">MKLKSGFLGLLYSRGYFNQCTDLAELDQLMSKECVIAYIGFDCTARSLHIGSLMQIMILRYLQKCGHKPIVLLGNGTTKIGDPSGKDKSRTLLSSSDIQENTLGIRKVLEKFIVCGDGVSDALLVYNAEWLDKLNYIDFLRNIGRHFSVNNMLTFDSVKLRLEREQNLSFLEFNYMLLQAYDFIELNQRYNCLLQIGGSDQWGNIVNGVELGRKLKLPQLFGLTTHLLLTSTGEKMGKTANGAVWLDGEMYSPADYWQYFRNVKDEDVGRFLRLFTELPLTEIEKLENLKGYEINEAKKILATEATRICHGEKIAQDIAYDALKVFECNDHSGLPVFYVCKSEIELGLSVVKLLQVSGMEKSNSSAKRLINDKGCKINDIIILDVNYKLSLQDFCGMSYIKLSCGKKRHLKVVLESNL</sequence>
<proteinExistence type="inferred from homology"/>
<organism>
    <name type="scientific">Ehrlichia ruminantium (strain Gardel)</name>
    <dbReference type="NCBI Taxonomy" id="302409"/>
    <lineage>
        <taxon>Bacteria</taxon>
        <taxon>Pseudomonadati</taxon>
        <taxon>Pseudomonadota</taxon>
        <taxon>Alphaproteobacteria</taxon>
        <taxon>Rickettsiales</taxon>
        <taxon>Anaplasmataceae</taxon>
        <taxon>Ehrlichia</taxon>
    </lineage>
</organism>
<comment type="function">
    <text evidence="1">Catalyzes the attachment of tyrosine to tRNA(Tyr) in a two-step reaction: tyrosine is first activated by ATP to form Tyr-AMP and then transferred to the acceptor end of tRNA(Tyr).</text>
</comment>
<comment type="catalytic activity">
    <reaction evidence="1">
        <text>tRNA(Tyr) + L-tyrosine + ATP = L-tyrosyl-tRNA(Tyr) + AMP + diphosphate + H(+)</text>
        <dbReference type="Rhea" id="RHEA:10220"/>
        <dbReference type="Rhea" id="RHEA-COMP:9706"/>
        <dbReference type="Rhea" id="RHEA-COMP:9707"/>
        <dbReference type="ChEBI" id="CHEBI:15378"/>
        <dbReference type="ChEBI" id="CHEBI:30616"/>
        <dbReference type="ChEBI" id="CHEBI:33019"/>
        <dbReference type="ChEBI" id="CHEBI:58315"/>
        <dbReference type="ChEBI" id="CHEBI:78442"/>
        <dbReference type="ChEBI" id="CHEBI:78536"/>
        <dbReference type="ChEBI" id="CHEBI:456215"/>
        <dbReference type="EC" id="6.1.1.1"/>
    </reaction>
</comment>
<comment type="subunit">
    <text evidence="1">Homodimer.</text>
</comment>
<comment type="subcellular location">
    <subcellularLocation>
        <location evidence="1">Cytoplasm</location>
    </subcellularLocation>
</comment>
<comment type="similarity">
    <text evidence="1">Belongs to the class-I aminoacyl-tRNA synthetase family. TyrS type 1 subfamily.</text>
</comment>
<evidence type="ECO:0000255" key="1">
    <source>
        <dbReference type="HAMAP-Rule" id="MF_02006"/>
    </source>
</evidence>
<name>SYY_EHRRG</name>
<reference key="1">
    <citation type="journal article" date="2006" name="J. Bacteriol.">
        <title>Comparative genomic analysis of three strains of Ehrlichia ruminantium reveals an active process of genome size plasticity.</title>
        <authorList>
            <person name="Frutos R."/>
            <person name="Viari A."/>
            <person name="Ferraz C."/>
            <person name="Morgat A."/>
            <person name="Eychenie S."/>
            <person name="Kandassamy Y."/>
            <person name="Chantal I."/>
            <person name="Bensaid A."/>
            <person name="Coissac E."/>
            <person name="Vachiery N."/>
            <person name="Demaille J."/>
            <person name="Martinez D."/>
        </authorList>
    </citation>
    <scope>NUCLEOTIDE SEQUENCE [LARGE SCALE GENOMIC DNA]</scope>
    <source>
        <strain>Gardel</strain>
    </source>
</reference>
<dbReference type="EC" id="6.1.1.1" evidence="1"/>
<dbReference type="EMBL" id="CR925677">
    <property type="protein sequence ID" value="CAI27504.1"/>
    <property type="molecule type" value="Genomic_DNA"/>
</dbReference>
<dbReference type="RefSeq" id="WP_011255254.1">
    <property type="nucleotide sequence ID" value="NC_006831.1"/>
</dbReference>
<dbReference type="SMR" id="Q5FF40"/>
<dbReference type="KEGG" id="erg:ERGA_CDS_00520"/>
<dbReference type="HOGENOM" id="CLU_024003_0_3_5"/>
<dbReference type="OrthoDB" id="9804243at2"/>
<dbReference type="Proteomes" id="UP000000533">
    <property type="component" value="Chromosome"/>
</dbReference>
<dbReference type="GO" id="GO:0005829">
    <property type="term" value="C:cytosol"/>
    <property type="evidence" value="ECO:0007669"/>
    <property type="project" value="TreeGrafter"/>
</dbReference>
<dbReference type="GO" id="GO:0005524">
    <property type="term" value="F:ATP binding"/>
    <property type="evidence" value="ECO:0007669"/>
    <property type="project" value="UniProtKB-UniRule"/>
</dbReference>
<dbReference type="GO" id="GO:0003723">
    <property type="term" value="F:RNA binding"/>
    <property type="evidence" value="ECO:0007669"/>
    <property type="project" value="UniProtKB-KW"/>
</dbReference>
<dbReference type="GO" id="GO:0004831">
    <property type="term" value="F:tyrosine-tRNA ligase activity"/>
    <property type="evidence" value="ECO:0007669"/>
    <property type="project" value="UniProtKB-UniRule"/>
</dbReference>
<dbReference type="GO" id="GO:0006437">
    <property type="term" value="P:tyrosyl-tRNA aminoacylation"/>
    <property type="evidence" value="ECO:0007669"/>
    <property type="project" value="UniProtKB-UniRule"/>
</dbReference>
<dbReference type="CDD" id="cd00165">
    <property type="entry name" value="S4"/>
    <property type="match status" value="1"/>
</dbReference>
<dbReference type="CDD" id="cd00805">
    <property type="entry name" value="TyrRS_core"/>
    <property type="match status" value="1"/>
</dbReference>
<dbReference type="FunFam" id="1.10.240.10:FF:000001">
    <property type="entry name" value="Tyrosine--tRNA ligase"/>
    <property type="match status" value="1"/>
</dbReference>
<dbReference type="Gene3D" id="3.40.50.620">
    <property type="entry name" value="HUPs"/>
    <property type="match status" value="1"/>
</dbReference>
<dbReference type="Gene3D" id="3.10.290.10">
    <property type="entry name" value="RNA-binding S4 domain"/>
    <property type="match status" value="1"/>
</dbReference>
<dbReference type="Gene3D" id="1.10.240.10">
    <property type="entry name" value="Tyrosyl-Transfer RNA Synthetase"/>
    <property type="match status" value="1"/>
</dbReference>
<dbReference type="HAMAP" id="MF_02006">
    <property type="entry name" value="Tyr_tRNA_synth_type1"/>
    <property type="match status" value="1"/>
</dbReference>
<dbReference type="InterPro" id="IPR002305">
    <property type="entry name" value="aa-tRNA-synth_Ic"/>
</dbReference>
<dbReference type="InterPro" id="IPR014729">
    <property type="entry name" value="Rossmann-like_a/b/a_fold"/>
</dbReference>
<dbReference type="InterPro" id="IPR036986">
    <property type="entry name" value="S4_RNA-bd_sf"/>
</dbReference>
<dbReference type="InterPro" id="IPR002307">
    <property type="entry name" value="Tyr-tRNA-ligase"/>
</dbReference>
<dbReference type="InterPro" id="IPR024088">
    <property type="entry name" value="Tyr-tRNA-ligase_bac-type"/>
</dbReference>
<dbReference type="InterPro" id="IPR024107">
    <property type="entry name" value="Tyr-tRNA-ligase_bac_1"/>
</dbReference>
<dbReference type="NCBIfam" id="TIGR00234">
    <property type="entry name" value="tyrS"/>
    <property type="match status" value="1"/>
</dbReference>
<dbReference type="PANTHER" id="PTHR11766:SF0">
    <property type="entry name" value="TYROSINE--TRNA LIGASE, MITOCHONDRIAL"/>
    <property type="match status" value="1"/>
</dbReference>
<dbReference type="PANTHER" id="PTHR11766">
    <property type="entry name" value="TYROSYL-TRNA SYNTHETASE"/>
    <property type="match status" value="1"/>
</dbReference>
<dbReference type="Pfam" id="PF00579">
    <property type="entry name" value="tRNA-synt_1b"/>
    <property type="match status" value="1"/>
</dbReference>
<dbReference type="PRINTS" id="PR01040">
    <property type="entry name" value="TRNASYNTHTYR"/>
</dbReference>
<dbReference type="SUPFAM" id="SSF55174">
    <property type="entry name" value="Alpha-L RNA-binding motif"/>
    <property type="match status" value="1"/>
</dbReference>
<dbReference type="SUPFAM" id="SSF52374">
    <property type="entry name" value="Nucleotidylyl transferase"/>
    <property type="match status" value="1"/>
</dbReference>
<dbReference type="PROSITE" id="PS50889">
    <property type="entry name" value="S4"/>
    <property type="match status" value="1"/>
</dbReference>
<accession>Q5FF40</accession>
<keyword id="KW-0030">Aminoacyl-tRNA synthetase</keyword>
<keyword id="KW-0067">ATP-binding</keyword>
<keyword id="KW-0963">Cytoplasm</keyword>
<keyword id="KW-0436">Ligase</keyword>
<keyword id="KW-0547">Nucleotide-binding</keyword>
<keyword id="KW-0648">Protein biosynthesis</keyword>
<keyword id="KW-0694">RNA-binding</keyword>
<feature type="chain" id="PRO_0000234706" description="Tyrosine--tRNA ligase">
    <location>
        <begin position="1"/>
        <end position="418"/>
    </location>
</feature>
<feature type="domain" description="S4 RNA-binding" evidence="1">
    <location>
        <begin position="348"/>
        <end position="413"/>
    </location>
</feature>
<feature type="short sequence motif" description="'HIGH' region">
    <location>
        <begin position="43"/>
        <end position="52"/>
    </location>
</feature>
<feature type="short sequence motif" description="'KMSKS' region">
    <location>
        <begin position="235"/>
        <end position="239"/>
    </location>
</feature>
<feature type="binding site" evidence="1">
    <location>
        <position position="38"/>
    </location>
    <ligand>
        <name>L-tyrosine</name>
        <dbReference type="ChEBI" id="CHEBI:58315"/>
    </ligand>
</feature>
<feature type="binding site" evidence="1">
    <location>
        <position position="175"/>
    </location>
    <ligand>
        <name>L-tyrosine</name>
        <dbReference type="ChEBI" id="CHEBI:58315"/>
    </ligand>
</feature>
<feature type="binding site" evidence="1">
    <location>
        <position position="179"/>
    </location>
    <ligand>
        <name>L-tyrosine</name>
        <dbReference type="ChEBI" id="CHEBI:58315"/>
    </ligand>
</feature>
<feature type="binding site" evidence="1">
    <location>
        <position position="238"/>
    </location>
    <ligand>
        <name>ATP</name>
        <dbReference type="ChEBI" id="CHEBI:30616"/>
    </ligand>
</feature>
<gene>
    <name evidence="1" type="primary">tyrS</name>
    <name type="ordered locus">ERGA_CDS_00520</name>
</gene>
<protein>
    <recommendedName>
        <fullName evidence="1">Tyrosine--tRNA ligase</fullName>
        <ecNumber evidence="1">6.1.1.1</ecNumber>
    </recommendedName>
    <alternativeName>
        <fullName evidence="1">Tyrosyl-tRNA synthetase</fullName>
        <shortName evidence="1">TyrRS</shortName>
    </alternativeName>
</protein>